<organism>
    <name type="scientific">Neurospora crassa (strain ATCC 24698 / 74-OR23-1A / CBS 708.71 / DSM 1257 / FGSC 987)</name>
    <dbReference type="NCBI Taxonomy" id="367110"/>
    <lineage>
        <taxon>Eukaryota</taxon>
        <taxon>Fungi</taxon>
        <taxon>Dikarya</taxon>
        <taxon>Ascomycota</taxon>
        <taxon>Pezizomycotina</taxon>
        <taxon>Sordariomycetes</taxon>
        <taxon>Sordariomycetidae</taxon>
        <taxon>Sordariales</taxon>
        <taxon>Sordariaceae</taxon>
        <taxon>Neurospora</taxon>
    </lineage>
</organism>
<evidence type="ECO:0000250" key="1">
    <source>
        <dbReference type="UniProtKB" id="C8VTV4"/>
    </source>
</evidence>
<evidence type="ECO:0000255" key="2">
    <source>
        <dbReference type="PROSITE-ProRule" id="PRU01165"/>
    </source>
</evidence>
<evidence type="ECO:0000256" key="3">
    <source>
        <dbReference type="SAM" id="MobiDB-lite"/>
    </source>
</evidence>
<evidence type="ECO:0000269" key="4">
    <source>
    </source>
</evidence>
<evidence type="ECO:0000303" key="5">
    <source>
    </source>
</evidence>
<evidence type="ECO:0000305" key="6"/>
<reference key="1">
    <citation type="journal article" date="2003" name="Nature">
        <title>The genome sequence of the filamentous fungus Neurospora crassa.</title>
        <authorList>
            <person name="Galagan J.E."/>
            <person name="Calvo S.E."/>
            <person name="Borkovich K.A."/>
            <person name="Selker E.U."/>
            <person name="Read N.D."/>
            <person name="Jaffe D.B."/>
            <person name="FitzHugh W."/>
            <person name="Ma L.-J."/>
            <person name="Smirnov S."/>
            <person name="Purcell S."/>
            <person name="Rehman B."/>
            <person name="Elkins T."/>
            <person name="Engels R."/>
            <person name="Wang S."/>
            <person name="Nielsen C.B."/>
            <person name="Butler J."/>
            <person name="Endrizzi M."/>
            <person name="Qui D."/>
            <person name="Ianakiev P."/>
            <person name="Bell-Pedersen D."/>
            <person name="Nelson M.A."/>
            <person name="Werner-Washburne M."/>
            <person name="Selitrennikoff C.P."/>
            <person name="Kinsey J.A."/>
            <person name="Braun E.L."/>
            <person name="Zelter A."/>
            <person name="Schulte U."/>
            <person name="Kothe G.O."/>
            <person name="Jedd G."/>
            <person name="Mewes H.-W."/>
            <person name="Staben C."/>
            <person name="Marcotte E."/>
            <person name="Greenberg D."/>
            <person name="Roy A."/>
            <person name="Foley K."/>
            <person name="Naylor J."/>
            <person name="Stange-Thomann N."/>
            <person name="Barrett R."/>
            <person name="Gnerre S."/>
            <person name="Kamal M."/>
            <person name="Kamvysselis M."/>
            <person name="Mauceli E.W."/>
            <person name="Bielke C."/>
            <person name="Rudd S."/>
            <person name="Frishman D."/>
            <person name="Krystofova S."/>
            <person name="Rasmussen C."/>
            <person name="Metzenberg R.L."/>
            <person name="Perkins D.D."/>
            <person name="Kroken S."/>
            <person name="Cogoni C."/>
            <person name="Macino G."/>
            <person name="Catcheside D.E.A."/>
            <person name="Li W."/>
            <person name="Pratt R.J."/>
            <person name="Osmani S.A."/>
            <person name="DeSouza C.P.C."/>
            <person name="Glass N.L."/>
            <person name="Orbach M.J."/>
            <person name="Berglund J.A."/>
            <person name="Voelker R."/>
            <person name="Yarden O."/>
            <person name="Plamann M."/>
            <person name="Seiler S."/>
            <person name="Dunlap J.C."/>
            <person name="Radford A."/>
            <person name="Aramayo R."/>
            <person name="Natvig D.O."/>
            <person name="Alex L.A."/>
            <person name="Mannhaupt G."/>
            <person name="Ebbole D.J."/>
            <person name="Freitag M."/>
            <person name="Paulsen I."/>
            <person name="Sachs M.S."/>
            <person name="Lander E.S."/>
            <person name="Nusbaum C."/>
            <person name="Birren B.W."/>
        </authorList>
    </citation>
    <scope>NUCLEOTIDE SEQUENCE [LARGE SCALE GENOMIC DNA]</scope>
    <source>
        <strain>ATCC 24698 / 74-OR23-1A / CBS 708.71 / DSM 1257 / FGSC 987</strain>
    </source>
</reference>
<reference key="2">
    <citation type="journal article" date="2008" name="Fungal Genet. Biol.">
        <title>Neurospora crassa ve-1 affects asexual conidiation.</title>
        <authorList>
            <person name="Bayram O."/>
            <person name="Krappmann S."/>
            <person name="Seiler S."/>
            <person name="Vogt N."/>
            <person name="Braus G.H."/>
        </authorList>
    </citation>
    <scope>FUNCTION</scope>
    <scope>DISRUPTION PHENOTYPE</scope>
    <scope>INDUCTION</scope>
</reference>
<accession>Q1K5S5</accession>
<dbReference type="EMBL" id="CM002237">
    <property type="protein sequence ID" value="EAA27918.1"/>
    <property type="molecule type" value="Genomic_DNA"/>
</dbReference>
<dbReference type="PIR" id="T49833">
    <property type="entry name" value="T49833"/>
</dbReference>
<dbReference type="RefSeq" id="XP_957154.1">
    <property type="nucleotide sequence ID" value="XM_952061.2"/>
</dbReference>
<dbReference type="SMR" id="Q1K5S5"/>
<dbReference type="STRING" id="367110.Q1K5S5"/>
<dbReference type="PaxDb" id="5141-EFNCRP00000001641"/>
<dbReference type="EnsemblFungi" id="EAA27918">
    <property type="protein sequence ID" value="EAA27918"/>
    <property type="gene ID" value="NCU01731"/>
</dbReference>
<dbReference type="GeneID" id="3873347"/>
<dbReference type="KEGG" id="ncr:NCU01731"/>
<dbReference type="VEuPathDB" id="FungiDB:NCU01731"/>
<dbReference type="HOGENOM" id="CLU_022491_2_0_1"/>
<dbReference type="InParanoid" id="Q1K5S5"/>
<dbReference type="OrthoDB" id="5384689at2759"/>
<dbReference type="Proteomes" id="UP000001805">
    <property type="component" value="Chromosome 6, Linkage Group II"/>
</dbReference>
<dbReference type="GO" id="GO:0005737">
    <property type="term" value="C:cytoplasm"/>
    <property type="evidence" value="ECO:0007669"/>
    <property type="project" value="UniProtKB-SubCell"/>
</dbReference>
<dbReference type="GO" id="GO:0005634">
    <property type="term" value="C:nucleus"/>
    <property type="evidence" value="ECO:0000318"/>
    <property type="project" value="GO_Central"/>
</dbReference>
<dbReference type="GO" id="GO:0030435">
    <property type="term" value="P:sporulation resulting in formation of a cellular spore"/>
    <property type="evidence" value="ECO:0000318"/>
    <property type="project" value="GO_Central"/>
</dbReference>
<dbReference type="GO" id="GO:0005992">
    <property type="term" value="P:trehalose biosynthetic process"/>
    <property type="evidence" value="ECO:0000318"/>
    <property type="project" value="GO_Central"/>
</dbReference>
<dbReference type="FunFam" id="2.60.40.3960:FF:000001">
    <property type="entry name" value="Sexual development activator VeA"/>
    <property type="match status" value="1"/>
</dbReference>
<dbReference type="Gene3D" id="2.60.40.3960">
    <property type="entry name" value="Velvet domain"/>
    <property type="match status" value="1"/>
</dbReference>
<dbReference type="InterPro" id="IPR021740">
    <property type="entry name" value="Velvet"/>
</dbReference>
<dbReference type="InterPro" id="IPR037525">
    <property type="entry name" value="Velvet_dom"/>
</dbReference>
<dbReference type="InterPro" id="IPR038491">
    <property type="entry name" value="Velvet_dom_sf"/>
</dbReference>
<dbReference type="PANTHER" id="PTHR33572:SF14">
    <property type="entry name" value="DEVELOPMENTAL AND SECONDARY METABOLISM REGULATOR VEA"/>
    <property type="match status" value="1"/>
</dbReference>
<dbReference type="PANTHER" id="PTHR33572">
    <property type="entry name" value="SPORE DEVELOPMENT REGULATOR VOSA"/>
    <property type="match status" value="1"/>
</dbReference>
<dbReference type="Pfam" id="PF11754">
    <property type="entry name" value="Velvet"/>
    <property type="match status" value="2"/>
</dbReference>
<dbReference type="PROSITE" id="PS51821">
    <property type="entry name" value="VELVET"/>
    <property type="match status" value="1"/>
</dbReference>
<name>VEA_NEUCR</name>
<sequence length="554" mass="61588">MGAQVIAAASNGLCHDDEPIASVKSRITRSGRKLWYSLRVVQEPLRARACGSGPKSSADRRPVDPPPVVELRIFEGESFEMAQERDVTFQYNANFFLYATLEHARVMAQGRLQTPSANTPPVLTGMPVSGMAYLDRPKLAGYFLFPDLSVRHEGRYKLTFNLYEETKEDKDKDPEEPNAPPDGSPGSFDFRMDIKSHDFVVYSAKKFPGLTESTPLSRTVAEQGCRVRIRRDVRMRRRDGKGNSGGNDYENGEEEYRRARRTATPDTAKQEAYRQRSMSGSTERTPYSSISDPQRRPSMADYPPQYAAQTPTSGGHLGFLGGNTHHQYPAQPPPQSFAQPHSVPPSPVYPTSQRAPYQHQPSSYPPPPPPHQPIFQSEHHTSRTYAPINPASRHDSIHQSTKQYTLPPLSEAVSPTQPHHQHPSIAPHRLPVTALPPLQVDRFSSASHNQHPMVSPSNMAAPPYPRAYSVSNSGGLTSAGGYNQLPPPPPPPPQVAGSKRAHDQTFRADPEMRRYQDGARERESVDDKEPPLCTFKYRRADGSVECKQADIGGY</sequence>
<comment type="function">
    <text evidence="1 4">Component of the velvet transcription factor complex that controls sexual/asexual developmental ratio in response to light, promoting sexual development in the darkness while stimulating asexual sporulation under illumination (PubMed:17631397). The velvet complex hat acts as a global regulator for secondary metabolite gene expression (By similarity).</text>
</comment>
<comment type="subunit">
    <text evidence="1">Component of the heterotrimeric velvet complex composed of lae-1, ve-1 and vel-2; Ve-1 acting as a bridging protein between lae-1 and vel-2 (By similarity).</text>
</comment>
<comment type="subcellular location">
    <subcellularLocation>
        <location evidence="1">Nucleus</location>
    </subcellularLocation>
    <subcellularLocation>
        <location evidence="1">Cytoplasm</location>
    </subcellularLocation>
    <text evidence="1">Enriched in the nucleus in the dark (By similarity).</text>
</comment>
<comment type="induction">
    <text evidence="4">Constitutively expressed during asexual and sexual development and induced by red light, indicating a light-dependent regulation (PubMed:17631397).</text>
</comment>
<comment type="domain">
    <text evidence="1">The C-terminal PEST domain is a region rich in proline, glutamic acid, serine and threonine residues that is required for the light-dependent regulation of development and secondary metabolism (By similarity).</text>
</comment>
<comment type="disruption phenotype">
    <text evidence="4">Results in increased conidiation associated with stunted aerial hyphae (PubMed:17631397).</text>
</comment>
<comment type="similarity">
    <text evidence="6">Belongs to the velvet family. VeA subfamily.</text>
</comment>
<gene>
    <name evidence="5" type="primary">ve-1</name>
    <name type="ORF">NCU01731</name>
</gene>
<protein>
    <recommendedName>
        <fullName evidence="6">Developmental and secondary metabolism regulator ve-1</fullName>
    </recommendedName>
    <alternativeName>
        <fullName evidence="6">Velvet complex subunit 1</fullName>
    </alternativeName>
</protein>
<keyword id="KW-0963">Cytoplasm</keyword>
<keyword id="KW-0539">Nucleus</keyword>
<keyword id="KW-1185">Reference proteome</keyword>
<keyword id="KW-0749">Sporulation</keyword>
<keyword id="KW-0804">Transcription</keyword>
<keyword id="KW-0805">Transcription regulation</keyword>
<proteinExistence type="evidence at transcript level"/>
<feature type="chain" id="PRO_0000435766" description="Developmental and secondary metabolism regulator ve-1">
    <location>
        <begin position="1"/>
        <end position="554"/>
    </location>
</feature>
<feature type="domain" description="Velvet" evidence="2">
    <location>
        <begin position="31"/>
        <end position="230"/>
    </location>
</feature>
<feature type="region of interest" description="Disordered" evidence="3">
    <location>
        <begin position="166"/>
        <end position="190"/>
    </location>
</feature>
<feature type="region of interest" description="Disordered" evidence="3">
    <location>
        <begin position="232"/>
        <end position="430"/>
    </location>
</feature>
<feature type="region of interest" description="PEST" evidence="1">
    <location>
        <begin position="455"/>
        <end position="487"/>
    </location>
</feature>
<feature type="region of interest" description="Disordered" evidence="3">
    <location>
        <begin position="465"/>
        <end position="528"/>
    </location>
</feature>
<feature type="short sequence motif" description="Nuclear localization signal" evidence="1">
    <location>
        <begin position="45"/>
        <end position="50"/>
    </location>
</feature>
<feature type="compositionally biased region" description="Basic and acidic residues" evidence="3">
    <location>
        <begin position="166"/>
        <end position="175"/>
    </location>
</feature>
<feature type="compositionally biased region" description="Polar residues" evidence="3">
    <location>
        <begin position="276"/>
        <end position="292"/>
    </location>
</feature>
<feature type="compositionally biased region" description="Pro residues" evidence="3">
    <location>
        <begin position="363"/>
        <end position="372"/>
    </location>
</feature>
<feature type="compositionally biased region" description="Pro residues" evidence="3">
    <location>
        <begin position="485"/>
        <end position="494"/>
    </location>
</feature>
<feature type="compositionally biased region" description="Basic and acidic residues" evidence="3">
    <location>
        <begin position="500"/>
        <end position="528"/>
    </location>
</feature>